<organism>
    <name type="scientific">Methanothermococcus thermolithotrophicus</name>
    <name type="common">Methanococcus thermolithotrophicus</name>
    <dbReference type="NCBI Taxonomy" id="2186"/>
    <lineage>
        <taxon>Archaea</taxon>
        <taxon>Methanobacteriati</taxon>
        <taxon>Methanobacteriota</taxon>
        <taxon>Methanomada group</taxon>
        <taxon>Methanococci</taxon>
        <taxon>Methanococcales</taxon>
        <taxon>Methanococcaceae</taxon>
        <taxon>Methanothermococcus</taxon>
    </lineage>
</organism>
<dbReference type="PIR" id="S05029">
    <property type="entry name" value="S05029"/>
</dbReference>
<dbReference type="SMR" id="P20022"/>
<dbReference type="GO" id="GO:0005886">
    <property type="term" value="C:plasma membrane"/>
    <property type="evidence" value="ECO:0007669"/>
    <property type="project" value="UniProtKB-SubCell"/>
</dbReference>
<dbReference type="GO" id="GO:0005524">
    <property type="term" value="F:ATP binding"/>
    <property type="evidence" value="ECO:0007669"/>
    <property type="project" value="InterPro"/>
</dbReference>
<dbReference type="GO" id="GO:0006754">
    <property type="term" value="P:ATP biosynthetic process"/>
    <property type="evidence" value="ECO:0007669"/>
    <property type="project" value="UniProtKB-KW"/>
</dbReference>
<dbReference type="GO" id="GO:1902600">
    <property type="term" value="P:proton transmembrane transport"/>
    <property type="evidence" value="ECO:0007669"/>
    <property type="project" value="UniProtKB-KW"/>
</dbReference>
<dbReference type="CDD" id="cd01135">
    <property type="entry name" value="V_A-ATPase_B"/>
    <property type="match status" value="1"/>
</dbReference>
<dbReference type="Gene3D" id="3.40.50.12240">
    <property type="match status" value="1"/>
</dbReference>
<dbReference type="InterPro" id="IPR000194">
    <property type="entry name" value="ATPase_F1/V1/A1_a/bsu_nucl-bd"/>
</dbReference>
<dbReference type="InterPro" id="IPR027417">
    <property type="entry name" value="P-loop_NTPase"/>
</dbReference>
<dbReference type="InterPro" id="IPR022879">
    <property type="entry name" value="V-ATPase_su_B/beta"/>
</dbReference>
<dbReference type="NCBIfam" id="NF003235">
    <property type="entry name" value="PRK04196.1"/>
    <property type="match status" value="1"/>
</dbReference>
<dbReference type="PANTHER" id="PTHR43389">
    <property type="entry name" value="V-TYPE PROTON ATPASE SUBUNIT B"/>
    <property type="match status" value="1"/>
</dbReference>
<dbReference type="PANTHER" id="PTHR43389:SF4">
    <property type="entry name" value="V-TYPE PROTON ATPASE SUBUNIT B"/>
    <property type="match status" value="1"/>
</dbReference>
<dbReference type="Pfam" id="PF00006">
    <property type="entry name" value="ATP-synt_ab"/>
    <property type="match status" value="1"/>
</dbReference>
<dbReference type="SUPFAM" id="SSF52540">
    <property type="entry name" value="P-loop containing nucleoside triphosphate hydrolases"/>
    <property type="match status" value="1"/>
</dbReference>
<comment type="function">
    <text evidence="1">Component of the A-type ATP synthase that produces ATP from ADP in the presence of a proton gradient across the membrane. The B chain is a regulatory subunit.</text>
</comment>
<comment type="subunit">
    <text evidence="1">Has multiple subunits with at least A(3), B(3), C, D, E, F, H, I and proteolipid K(x).</text>
</comment>
<comment type="subcellular location">
    <subcellularLocation>
        <location evidence="1">Cell membrane</location>
        <topology evidence="1">Peripheral membrane protein</topology>
    </subcellularLocation>
</comment>
<comment type="similarity">
    <text evidence="1">Belongs to the ATPase alpha/beta chains family.</text>
</comment>
<reference key="1">
    <citation type="journal article" date="1989" name="FEBS Lett.">
        <title>The H+ ATPase regulatory subunit of Methanococcus thermolithotrophicus: amplification of an 800 bp fragment by polymerase chain reaction.</title>
        <authorList>
            <person name="Bernasconi P."/>
            <person name="Rausch T."/>
            <person name="Gogarten J.P."/>
            <person name="Taiz L."/>
        </authorList>
    </citation>
    <scope>NUCLEOTIDE SEQUENCE [GENOMIC DNA]</scope>
</reference>
<gene>
    <name evidence="1" type="primary">atpB</name>
</gene>
<keyword id="KW-0066">ATP synthesis</keyword>
<keyword id="KW-1003">Cell membrane</keyword>
<keyword id="KW-0375">Hydrogen ion transport</keyword>
<keyword id="KW-0406">Ion transport</keyword>
<keyword id="KW-0472">Membrane</keyword>
<keyword id="KW-0813">Transport</keyword>
<sequence length="253" mass="27670">NTNETKVRFTGETAKIGVSLEMLGRIFNGAGKPIDGGPEIIPEKKLDINGYPLNPVSRNPPNAFVQTGISTIDGTNTLVRGQKLPIFSGSGLPHNTLAAQIARQAKVRGEGEQFAVVFAAMGITNEEANYFMEEFKKPGALENAVVFINLANDPAIERIITPRLALTTAEYLAYEKDMHVLVVLTDMTNYCEALREIAAARNEVPGRRGYPGYMYTDLATLYERAGRVKGRKGTVTQIPILTMPHDDITHPIP</sequence>
<proteinExistence type="inferred from homology"/>
<protein>
    <recommendedName>
        <fullName evidence="1">A-type ATP synthase subunit B</fullName>
    </recommendedName>
</protein>
<accession>P20022</accession>
<evidence type="ECO:0000255" key="1">
    <source>
        <dbReference type="HAMAP-Rule" id="MF_00310"/>
    </source>
</evidence>
<feature type="chain" id="PRO_0000144659" description="A-type ATP synthase subunit B">
    <location>
        <begin position="1" status="less than"/>
        <end position="253" status="greater than"/>
    </location>
</feature>
<feature type="non-terminal residue">
    <location>
        <position position="1"/>
    </location>
</feature>
<feature type="non-terminal residue">
    <location>
        <position position="253"/>
    </location>
</feature>
<name>AATB_METTL</name>